<feature type="chain" id="PRO_0000266958" description="Probable GTP-binding protein EngB">
    <location>
        <begin position="1"/>
        <end position="195"/>
    </location>
</feature>
<feature type="domain" description="EngB-type G" evidence="1">
    <location>
        <begin position="24"/>
        <end position="195"/>
    </location>
</feature>
<feature type="binding site" evidence="1">
    <location>
        <begin position="32"/>
        <end position="39"/>
    </location>
    <ligand>
        <name>GTP</name>
        <dbReference type="ChEBI" id="CHEBI:37565"/>
    </ligand>
</feature>
<feature type="binding site" evidence="1">
    <location>
        <position position="39"/>
    </location>
    <ligand>
        <name>Mg(2+)</name>
        <dbReference type="ChEBI" id="CHEBI:18420"/>
    </ligand>
</feature>
<feature type="binding site" evidence="1">
    <location>
        <begin position="59"/>
        <end position="63"/>
    </location>
    <ligand>
        <name>GTP</name>
        <dbReference type="ChEBI" id="CHEBI:37565"/>
    </ligand>
</feature>
<feature type="binding site" evidence="1">
    <location>
        <position position="61"/>
    </location>
    <ligand>
        <name>Mg(2+)</name>
        <dbReference type="ChEBI" id="CHEBI:18420"/>
    </ligand>
</feature>
<feature type="binding site" evidence="1">
    <location>
        <begin position="77"/>
        <end position="80"/>
    </location>
    <ligand>
        <name>GTP</name>
        <dbReference type="ChEBI" id="CHEBI:37565"/>
    </ligand>
</feature>
<feature type="binding site" evidence="1">
    <location>
        <begin position="144"/>
        <end position="147"/>
    </location>
    <ligand>
        <name>GTP</name>
        <dbReference type="ChEBI" id="CHEBI:37565"/>
    </ligand>
</feature>
<feature type="binding site" evidence="1">
    <location>
        <begin position="176"/>
        <end position="178"/>
    </location>
    <ligand>
        <name>GTP</name>
        <dbReference type="ChEBI" id="CHEBI:37565"/>
    </ligand>
</feature>
<proteinExistence type="inferred from homology"/>
<accession>Q4L712</accession>
<comment type="function">
    <text evidence="1">Necessary for normal cell division and for the maintenance of normal septation.</text>
</comment>
<comment type="cofactor">
    <cofactor evidence="1">
        <name>Mg(2+)</name>
        <dbReference type="ChEBI" id="CHEBI:18420"/>
    </cofactor>
</comment>
<comment type="similarity">
    <text evidence="1">Belongs to the TRAFAC class TrmE-Era-EngA-EngB-Septin-like GTPase superfamily. EngB GTPase family.</text>
</comment>
<dbReference type="EMBL" id="AP006716">
    <property type="protein sequence ID" value="BAE04563.1"/>
    <property type="molecule type" value="Genomic_DNA"/>
</dbReference>
<dbReference type="SMR" id="Q4L712"/>
<dbReference type="KEGG" id="sha:SH1254"/>
<dbReference type="eggNOG" id="COG0218">
    <property type="taxonomic scope" value="Bacteria"/>
</dbReference>
<dbReference type="HOGENOM" id="CLU_033732_3_0_9"/>
<dbReference type="OrthoDB" id="9804921at2"/>
<dbReference type="Proteomes" id="UP000000543">
    <property type="component" value="Chromosome"/>
</dbReference>
<dbReference type="GO" id="GO:0005829">
    <property type="term" value="C:cytosol"/>
    <property type="evidence" value="ECO:0007669"/>
    <property type="project" value="TreeGrafter"/>
</dbReference>
<dbReference type="GO" id="GO:0005525">
    <property type="term" value="F:GTP binding"/>
    <property type="evidence" value="ECO:0007669"/>
    <property type="project" value="UniProtKB-UniRule"/>
</dbReference>
<dbReference type="GO" id="GO:0046872">
    <property type="term" value="F:metal ion binding"/>
    <property type="evidence" value="ECO:0007669"/>
    <property type="project" value="UniProtKB-KW"/>
</dbReference>
<dbReference type="GO" id="GO:0000917">
    <property type="term" value="P:division septum assembly"/>
    <property type="evidence" value="ECO:0007669"/>
    <property type="project" value="UniProtKB-KW"/>
</dbReference>
<dbReference type="CDD" id="cd01876">
    <property type="entry name" value="YihA_EngB"/>
    <property type="match status" value="1"/>
</dbReference>
<dbReference type="FunFam" id="3.40.50.300:FF:000098">
    <property type="entry name" value="Probable GTP-binding protein EngB"/>
    <property type="match status" value="1"/>
</dbReference>
<dbReference type="Gene3D" id="3.40.50.300">
    <property type="entry name" value="P-loop containing nucleotide triphosphate hydrolases"/>
    <property type="match status" value="1"/>
</dbReference>
<dbReference type="HAMAP" id="MF_00321">
    <property type="entry name" value="GTPase_EngB"/>
    <property type="match status" value="1"/>
</dbReference>
<dbReference type="InterPro" id="IPR030393">
    <property type="entry name" value="G_ENGB_dom"/>
</dbReference>
<dbReference type="InterPro" id="IPR006073">
    <property type="entry name" value="GTP-bd"/>
</dbReference>
<dbReference type="InterPro" id="IPR019987">
    <property type="entry name" value="GTP-bd_ribosome_bio_YsxC"/>
</dbReference>
<dbReference type="InterPro" id="IPR027417">
    <property type="entry name" value="P-loop_NTPase"/>
</dbReference>
<dbReference type="NCBIfam" id="TIGR03598">
    <property type="entry name" value="GTPase_YsxC"/>
    <property type="match status" value="1"/>
</dbReference>
<dbReference type="PANTHER" id="PTHR11649:SF13">
    <property type="entry name" value="ENGB-TYPE G DOMAIN-CONTAINING PROTEIN"/>
    <property type="match status" value="1"/>
</dbReference>
<dbReference type="PANTHER" id="PTHR11649">
    <property type="entry name" value="MSS1/TRME-RELATED GTP-BINDING PROTEIN"/>
    <property type="match status" value="1"/>
</dbReference>
<dbReference type="Pfam" id="PF01926">
    <property type="entry name" value="MMR_HSR1"/>
    <property type="match status" value="1"/>
</dbReference>
<dbReference type="SUPFAM" id="SSF52540">
    <property type="entry name" value="P-loop containing nucleoside triphosphate hydrolases"/>
    <property type="match status" value="1"/>
</dbReference>
<dbReference type="PROSITE" id="PS51706">
    <property type="entry name" value="G_ENGB"/>
    <property type="match status" value="1"/>
</dbReference>
<name>ENGB_STAHJ</name>
<evidence type="ECO:0000255" key="1">
    <source>
        <dbReference type="HAMAP-Rule" id="MF_00321"/>
    </source>
</evidence>
<gene>
    <name evidence="1" type="primary">engB</name>
    <name type="ordered locus">SH1254</name>
</gene>
<reference key="1">
    <citation type="journal article" date="2005" name="J. Bacteriol.">
        <title>Whole-genome sequencing of Staphylococcus haemolyticus uncovers the extreme plasticity of its genome and the evolution of human-colonizing staphylococcal species.</title>
        <authorList>
            <person name="Takeuchi F."/>
            <person name="Watanabe S."/>
            <person name="Baba T."/>
            <person name="Yuzawa H."/>
            <person name="Ito T."/>
            <person name="Morimoto Y."/>
            <person name="Kuroda M."/>
            <person name="Cui L."/>
            <person name="Takahashi M."/>
            <person name="Ankai A."/>
            <person name="Baba S."/>
            <person name="Fukui S."/>
            <person name="Lee J.C."/>
            <person name="Hiramatsu K."/>
        </authorList>
    </citation>
    <scope>NUCLEOTIDE SEQUENCE [LARGE SCALE GENOMIC DNA]</scope>
    <source>
        <strain>JCSC1435</strain>
    </source>
</reference>
<protein>
    <recommendedName>
        <fullName evidence="1">Probable GTP-binding protein EngB</fullName>
    </recommendedName>
</protein>
<organism>
    <name type="scientific">Staphylococcus haemolyticus (strain JCSC1435)</name>
    <dbReference type="NCBI Taxonomy" id="279808"/>
    <lineage>
        <taxon>Bacteria</taxon>
        <taxon>Bacillati</taxon>
        <taxon>Bacillota</taxon>
        <taxon>Bacilli</taxon>
        <taxon>Bacillales</taxon>
        <taxon>Staphylococcaceae</taxon>
        <taxon>Staphylococcus</taxon>
    </lineage>
</organism>
<sequence length="195" mass="22300">MNINPNNIDLIISAVQEAQYPDTGLSEVALSGRSNVGKSSFINSMIGRKNMARTSQQPGKTQTLNFFNIDDQLIFVDVPGYGYAKVSKSQREKFGKMIEEYLTKRESLKLVIQLVDLRHNPTEDDVLMYNYLKHFDIPTLVICTKEDKIAKGKIQKHIKNIKEKLDLDPDDTIISYSSIQNTKQQQIWDLIANYL</sequence>
<keyword id="KW-0131">Cell cycle</keyword>
<keyword id="KW-0132">Cell division</keyword>
<keyword id="KW-0342">GTP-binding</keyword>
<keyword id="KW-0460">Magnesium</keyword>
<keyword id="KW-0479">Metal-binding</keyword>
<keyword id="KW-0547">Nucleotide-binding</keyword>
<keyword id="KW-0717">Septation</keyword>